<accession>A6TEW3</accession>
<reference key="1">
    <citation type="submission" date="2006-09" db="EMBL/GenBank/DDBJ databases">
        <authorList>
            <consortium name="The Klebsiella pneumonia Genome Sequencing Project"/>
            <person name="McClelland M."/>
            <person name="Sanderson E.K."/>
            <person name="Spieth J."/>
            <person name="Clifton W.S."/>
            <person name="Latreille P."/>
            <person name="Sabo A."/>
            <person name="Pepin K."/>
            <person name="Bhonagiri V."/>
            <person name="Porwollik S."/>
            <person name="Ali J."/>
            <person name="Wilson R.K."/>
        </authorList>
    </citation>
    <scope>NUCLEOTIDE SEQUENCE [LARGE SCALE GENOMIC DNA]</scope>
    <source>
        <strain>ATCC 700721 / MGH 78578</strain>
    </source>
</reference>
<protein>
    <recommendedName>
        <fullName evidence="1">Small ribosomal subunit protein uS17</fullName>
    </recommendedName>
    <alternativeName>
        <fullName evidence="2">30S ribosomal protein S17</fullName>
    </alternativeName>
</protein>
<name>RS17_KLEP7</name>
<evidence type="ECO:0000255" key="1">
    <source>
        <dbReference type="HAMAP-Rule" id="MF_01345"/>
    </source>
</evidence>
<evidence type="ECO:0000305" key="2"/>
<keyword id="KW-0687">Ribonucleoprotein</keyword>
<keyword id="KW-0689">Ribosomal protein</keyword>
<keyword id="KW-0694">RNA-binding</keyword>
<keyword id="KW-0699">rRNA-binding</keyword>
<feature type="chain" id="PRO_1000054965" description="Small ribosomal subunit protein uS17">
    <location>
        <begin position="1"/>
        <end position="84"/>
    </location>
</feature>
<comment type="function">
    <text evidence="1">One of the primary rRNA binding proteins, it binds specifically to the 5'-end of 16S ribosomal RNA.</text>
</comment>
<comment type="subunit">
    <text evidence="1">Part of the 30S ribosomal subunit.</text>
</comment>
<comment type="similarity">
    <text evidence="1">Belongs to the universal ribosomal protein uS17 family.</text>
</comment>
<organism>
    <name type="scientific">Klebsiella pneumoniae subsp. pneumoniae (strain ATCC 700721 / MGH 78578)</name>
    <dbReference type="NCBI Taxonomy" id="272620"/>
    <lineage>
        <taxon>Bacteria</taxon>
        <taxon>Pseudomonadati</taxon>
        <taxon>Pseudomonadota</taxon>
        <taxon>Gammaproteobacteria</taxon>
        <taxon>Enterobacterales</taxon>
        <taxon>Enterobacteriaceae</taxon>
        <taxon>Klebsiella/Raoultella group</taxon>
        <taxon>Klebsiella</taxon>
        <taxon>Klebsiella pneumoniae complex</taxon>
    </lineage>
</organism>
<dbReference type="EMBL" id="CP000647">
    <property type="protein sequence ID" value="ABR79097.1"/>
    <property type="molecule type" value="Genomic_DNA"/>
</dbReference>
<dbReference type="RefSeq" id="WP_002919751.1">
    <property type="nucleotide sequence ID" value="NC_009648.1"/>
</dbReference>
<dbReference type="SMR" id="A6TEW3"/>
<dbReference type="STRING" id="272620.KPN_03710"/>
<dbReference type="jPOST" id="A6TEW3"/>
<dbReference type="PaxDb" id="272620-KPN_03710"/>
<dbReference type="EnsemblBacteria" id="ABR79097">
    <property type="protein sequence ID" value="ABR79097"/>
    <property type="gene ID" value="KPN_03710"/>
</dbReference>
<dbReference type="GeneID" id="93251038"/>
<dbReference type="KEGG" id="kpn:KPN_03710"/>
<dbReference type="HOGENOM" id="CLU_073626_1_1_6"/>
<dbReference type="Proteomes" id="UP000000265">
    <property type="component" value="Chromosome"/>
</dbReference>
<dbReference type="GO" id="GO:0022627">
    <property type="term" value="C:cytosolic small ribosomal subunit"/>
    <property type="evidence" value="ECO:0007669"/>
    <property type="project" value="TreeGrafter"/>
</dbReference>
<dbReference type="GO" id="GO:0019843">
    <property type="term" value="F:rRNA binding"/>
    <property type="evidence" value="ECO:0007669"/>
    <property type="project" value="UniProtKB-UniRule"/>
</dbReference>
<dbReference type="GO" id="GO:0003735">
    <property type="term" value="F:structural constituent of ribosome"/>
    <property type="evidence" value="ECO:0007669"/>
    <property type="project" value="InterPro"/>
</dbReference>
<dbReference type="GO" id="GO:0006412">
    <property type="term" value="P:translation"/>
    <property type="evidence" value="ECO:0007669"/>
    <property type="project" value="UniProtKB-UniRule"/>
</dbReference>
<dbReference type="CDD" id="cd00364">
    <property type="entry name" value="Ribosomal_uS17"/>
    <property type="match status" value="1"/>
</dbReference>
<dbReference type="FunFam" id="2.40.50.140:FF:000014">
    <property type="entry name" value="30S ribosomal protein S17"/>
    <property type="match status" value="1"/>
</dbReference>
<dbReference type="Gene3D" id="2.40.50.140">
    <property type="entry name" value="Nucleic acid-binding proteins"/>
    <property type="match status" value="1"/>
</dbReference>
<dbReference type="HAMAP" id="MF_01345_B">
    <property type="entry name" value="Ribosomal_uS17_B"/>
    <property type="match status" value="1"/>
</dbReference>
<dbReference type="InterPro" id="IPR012340">
    <property type="entry name" value="NA-bd_OB-fold"/>
</dbReference>
<dbReference type="InterPro" id="IPR000266">
    <property type="entry name" value="Ribosomal_uS17"/>
</dbReference>
<dbReference type="InterPro" id="IPR019984">
    <property type="entry name" value="Ribosomal_uS17_bact/chlr"/>
</dbReference>
<dbReference type="InterPro" id="IPR019979">
    <property type="entry name" value="Ribosomal_uS17_CS"/>
</dbReference>
<dbReference type="NCBIfam" id="NF004123">
    <property type="entry name" value="PRK05610.1"/>
    <property type="match status" value="1"/>
</dbReference>
<dbReference type="NCBIfam" id="TIGR03635">
    <property type="entry name" value="uS17_bact"/>
    <property type="match status" value="1"/>
</dbReference>
<dbReference type="PANTHER" id="PTHR10744">
    <property type="entry name" value="40S RIBOSOMAL PROTEIN S11 FAMILY MEMBER"/>
    <property type="match status" value="1"/>
</dbReference>
<dbReference type="PANTHER" id="PTHR10744:SF1">
    <property type="entry name" value="SMALL RIBOSOMAL SUBUNIT PROTEIN US17M"/>
    <property type="match status" value="1"/>
</dbReference>
<dbReference type="Pfam" id="PF00366">
    <property type="entry name" value="Ribosomal_S17"/>
    <property type="match status" value="1"/>
</dbReference>
<dbReference type="PRINTS" id="PR00973">
    <property type="entry name" value="RIBOSOMALS17"/>
</dbReference>
<dbReference type="SUPFAM" id="SSF50249">
    <property type="entry name" value="Nucleic acid-binding proteins"/>
    <property type="match status" value="1"/>
</dbReference>
<dbReference type="PROSITE" id="PS00056">
    <property type="entry name" value="RIBOSOMAL_S17"/>
    <property type="match status" value="1"/>
</dbReference>
<sequence>MTDKIRTLQGRVVSDKMEKSIVVAIERMVKHPVYGKFIKRTTKLHVHDENNECGIGDKVEIRECRPLSKTKSWTLVRVVEKAVL</sequence>
<proteinExistence type="inferred from homology"/>
<gene>
    <name evidence="1" type="primary">rpsQ</name>
    <name type="ordered locus">KPN78578_36730</name>
    <name type="ORF">KPN_03710</name>
</gene>